<dbReference type="EC" id="2.5.1.6" evidence="1"/>
<dbReference type="EMBL" id="CP000102">
    <property type="protein sequence ID" value="ABC57840.1"/>
    <property type="molecule type" value="Genomic_DNA"/>
</dbReference>
<dbReference type="RefSeq" id="WP_011407039.1">
    <property type="nucleotide sequence ID" value="NC_007681.1"/>
</dbReference>
<dbReference type="SMR" id="Q2NEB3"/>
<dbReference type="STRING" id="339860.Msp_1470"/>
<dbReference type="KEGG" id="mst:Msp_1470"/>
<dbReference type="eggNOG" id="arCOG01678">
    <property type="taxonomic scope" value="Archaea"/>
</dbReference>
<dbReference type="HOGENOM" id="CLU_057642_0_0_2"/>
<dbReference type="OrthoDB" id="204488at2157"/>
<dbReference type="UniPathway" id="UPA00315">
    <property type="reaction ID" value="UER00080"/>
</dbReference>
<dbReference type="Proteomes" id="UP000001931">
    <property type="component" value="Chromosome"/>
</dbReference>
<dbReference type="GO" id="GO:0005524">
    <property type="term" value="F:ATP binding"/>
    <property type="evidence" value="ECO:0007669"/>
    <property type="project" value="UniProtKB-UniRule"/>
</dbReference>
<dbReference type="GO" id="GO:0000287">
    <property type="term" value="F:magnesium ion binding"/>
    <property type="evidence" value="ECO:0007669"/>
    <property type="project" value="UniProtKB-UniRule"/>
</dbReference>
<dbReference type="GO" id="GO:0004478">
    <property type="term" value="F:methionine adenosyltransferase activity"/>
    <property type="evidence" value="ECO:0007669"/>
    <property type="project" value="UniProtKB-UniRule"/>
</dbReference>
<dbReference type="GO" id="GO:0006730">
    <property type="term" value="P:one-carbon metabolic process"/>
    <property type="evidence" value="ECO:0007669"/>
    <property type="project" value="UniProtKB-KW"/>
</dbReference>
<dbReference type="GO" id="GO:0006556">
    <property type="term" value="P:S-adenosylmethionine biosynthetic process"/>
    <property type="evidence" value="ECO:0007669"/>
    <property type="project" value="UniProtKB-UniRule"/>
</dbReference>
<dbReference type="Gene3D" id="3.30.300.10">
    <property type="match status" value="1"/>
</dbReference>
<dbReference type="Gene3D" id="3.30.300.280">
    <property type="entry name" value="S-adenosylmethionine synthetase, C-terminal domain"/>
    <property type="match status" value="2"/>
</dbReference>
<dbReference type="HAMAP" id="MF_00136">
    <property type="entry name" value="S_AdoMet_synth2"/>
    <property type="match status" value="1"/>
</dbReference>
<dbReference type="InterPro" id="IPR027790">
    <property type="entry name" value="AdoMet_synthase_2_family"/>
</dbReference>
<dbReference type="InterPro" id="IPR042544">
    <property type="entry name" value="AdoMet_synthase_3"/>
</dbReference>
<dbReference type="InterPro" id="IPR002795">
    <property type="entry name" value="S-AdoMet_synthetase_arc"/>
</dbReference>
<dbReference type="NCBIfam" id="NF003364">
    <property type="entry name" value="PRK04439.1-3"/>
    <property type="match status" value="1"/>
</dbReference>
<dbReference type="NCBIfam" id="NF003366">
    <property type="entry name" value="PRK04439.1-5"/>
    <property type="match status" value="1"/>
</dbReference>
<dbReference type="PANTHER" id="PTHR36697">
    <property type="entry name" value="S-ADENOSYLMETHIONINE SYNTHASE"/>
    <property type="match status" value="1"/>
</dbReference>
<dbReference type="PANTHER" id="PTHR36697:SF1">
    <property type="entry name" value="S-ADENOSYLMETHIONINE SYNTHASE"/>
    <property type="match status" value="1"/>
</dbReference>
<dbReference type="Pfam" id="PF01941">
    <property type="entry name" value="AdoMet_Synthase"/>
    <property type="match status" value="1"/>
</dbReference>
<sequence length="407" mass="44895">MRNIKIEKAVQRPIEQNEIEVVERKGIGHPDSISDGIAEAVSRVLSQTYKEKAGHVLHHNTDEVQITAGESDPKFGGGQIIKPIQILLTGRAANEFTLPSGETKKIGVDTIAIEAAKKFLQDTIINLDVEYGTVVECKIGQGSADLRDVFQRPNTIPSSNDTSFGVGYAPFSQTENLVLKTEELLNSKDFKKQYPFVGEDIKVMGLREKEDITLTIAAAFVSKYVDDVDAYLNMKDELKNIVNDLAAKETDLSVKTLINTADDETKKDESGYYLTVTGTSAEMGDDGSVGRGNRANGLITPNRPMSMEATSGKNPINHVGKIYNLLSNEITREVVSDVEGVKSIDMIILSQIGKPIDQPRTATAHIQTEEGYSINDVEEDVTRIINKWLENITDIKEFMLEGKLRTF</sequence>
<name>METK_METST</name>
<reference key="1">
    <citation type="journal article" date="2006" name="J. Bacteriol.">
        <title>The genome sequence of Methanosphaera stadtmanae reveals why this human intestinal archaeon is restricted to methanol and H2 for methane formation and ATP synthesis.</title>
        <authorList>
            <person name="Fricke W.F."/>
            <person name="Seedorf H."/>
            <person name="Henne A."/>
            <person name="Kruer M."/>
            <person name="Liesegang H."/>
            <person name="Hedderich R."/>
            <person name="Gottschalk G."/>
            <person name="Thauer R.K."/>
        </authorList>
    </citation>
    <scope>NUCLEOTIDE SEQUENCE [LARGE SCALE GENOMIC DNA]</scope>
    <source>
        <strain>ATCC 43021 / DSM 3091 / JCM 11832 / MCB-3</strain>
    </source>
</reference>
<comment type="function">
    <text evidence="1">Catalyzes the formation of S-adenosylmethionine from methionine and ATP.</text>
</comment>
<comment type="catalytic activity">
    <reaction evidence="1">
        <text>L-methionine + ATP + H2O = S-adenosyl-L-methionine + phosphate + diphosphate</text>
        <dbReference type="Rhea" id="RHEA:21080"/>
        <dbReference type="ChEBI" id="CHEBI:15377"/>
        <dbReference type="ChEBI" id="CHEBI:30616"/>
        <dbReference type="ChEBI" id="CHEBI:33019"/>
        <dbReference type="ChEBI" id="CHEBI:43474"/>
        <dbReference type="ChEBI" id="CHEBI:57844"/>
        <dbReference type="ChEBI" id="CHEBI:59789"/>
        <dbReference type="EC" id="2.5.1.6"/>
    </reaction>
</comment>
<comment type="cofactor">
    <cofactor evidence="1">
        <name>Mg(2+)</name>
        <dbReference type="ChEBI" id="CHEBI:18420"/>
    </cofactor>
</comment>
<comment type="pathway">
    <text evidence="1">Amino-acid biosynthesis; S-adenosyl-L-methionine biosynthesis; S-adenosyl-L-methionine from L-methionine: step 1/1.</text>
</comment>
<comment type="similarity">
    <text evidence="1">Belongs to the AdoMet synthase 2 family.</text>
</comment>
<evidence type="ECO:0000255" key="1">
    <source>
        <dbReference type="HAMAP-Rule" id="MF_00136"/>
    </source>
</evidence>
<organism>
    <name type="scientific">Methanosphaera stadtmanae (strain ATCC 43021 / DSM 3091 / JCM 11832 / MCB-3)</name>
    <dbReference type="NCBI Taxonomy" id="339860"/>
    <lineage>
        <taxon>Archaea</taxon>
        <taxon>Methanobacteriati</taxon>
        <taxon>Methanobacteriota</taxon>
        <taxon>Methanomada group</taxon>
        <taxon>Methanobacteria</taxon>
        <taxon>Methanobacteriales</taxon>
        <taxon>Methanobacteriaceae</taxon>
        <taxon>Methanosphaera</taxon>
    </lineage>
</organism>
<gene>
    <name evidence="1" type="primary">mat</name>
    <name type="ordered locus">Msp_1470</name>
</gene>
<proteinExistence type="inferred from homology"/>
<feature type="chain" id="PRO_0000259466" description="S-adenosylmethionine synthase">
    <location>
        <begin position="1"/>
        <end position="407"/>
    </location>
</feature>
<feature type="binding site" evidence="1">
    <location>
        <begin position="140"/>
        <end position="145"/>
    </location>
    <ligand>
        <name>ATP</name>
        <dbReference type="ChEBI" id="CHEBI:30616"/>
    </ligand>
</feature>
<accession>Q2NEB3</accession>
<protein>
    <recommendedName>
        <fullName evidence="1">S-adenosylmethionine synthase</fullName>
        <shortName evidence="1">AdoMet synthase</shortName>
        <ecNumber evidence="1">2.5.1.6</ecNumber>
    </recommendedName>
    <alternativeName>
        <fullName evidence="1">Methionine adenosyltransferase</fullName>
    </alternativeName>
</protein>
<keyword id="KW-0067">ATP-binding</keyword>
<keyword id="KW-0460">Magnesium</keyword>
<keyword id="KW-0547">Nucleotide-binding</keyword>
<keyword id="KW-0554">One-carbon metabolism</keyword>
<keyword id="KW-1185">Reference proteome</keyword>
<keyword id="KW-0808">Transferase</keyword>